<protein>
    <recommendedName>
        <fullName evidence="1">Aspartyl/glutamyl-tRNA(Asn/Gln) amidotransferase subunit B</fullName>
        <shortName evidence="1">Asp/Glu-ADT subunit B</shortName>
        <ecNumber evidence="1">6.3.5.-</ecNumber>
    </recommendedName>
</protein>
<evidence type="ECO:0000255" key="1">
    <source>
        <dbReference type="HAMAP-Rule" id="MF_00121"/>
    </source>
</evidence>
<sequence length="474" mass="53424">MNFQTTIGLEVHVELKTNSKIYSPSPVEYGDQPNANTNVIDWGYPGVLPSLNKGVVRDGIMAGLALHAQIAHHMHFDRKNYFYPDNPKAYQITQSDTPIAHDGWIEIEVNGKKKKIGIKEMHIEEDAGKNTHTSKYSYVDLNRQGTPLIEIVSKPDIASPEEAVAYLEALRQRIQFTGISDVKMEEGSMRVDTNISIRPIGSDKFGTKTEMKNINSFNYVRKALAFEEKRHQKVLMAGGHIGQETRRYDEATGETILMRTKEGSDDYRYFPEPDLPPVNVSDEWISEIESEMPEMPGERREHYVKDLGLTDYDAMVLTQTKEMSDFFEEAVKDGGDPKRVANYLMNDVNSYLNDKQVDLQDTKLTPSNLAGMVKLIEDGTISSKMAKKVFKGILDGEEPNAYAKEHGLVQLSDPAQLQPIVDEVLDNNEQSIEDFKNGKDRAVGYLMGQIMKQTRGKANPQVVTQLLMKSLKAK</sequence>
<dbReference type="EC" id="6.3.5.-" evidence="1"/>
<dbReference type="EMBL" id="AP007281">
    <property type="protein sequence ID" value="BAG25867.1"/>
    <property type="molecule type" value="Genomic_DNA"/>
</dbReference>
<dbReference type="RefSeq" id="WP_003668754.1">
    <property type="nucleotide sequence ID" value="NC_010609.1"/>
</dbReference>
<dbReference type="SMR" id="B2G8T5"/>
<dbReference type="KEGG" id="lrf:LAR_1351"/>
<dbReference type="HOGENOM" id="CLU_019240_0_0_9"/>
<dbReference type="GO" id="GO:0050566">
    <property type="term" value="F:asparaginyl-tRNA synthase (glutamine-hydrolyzing) activity"/>
    <property type="evidence" value="ECO:0007669"/>
    <property type="project" value="RHEA"/>
</dbReference>
<dbReference type="GO" id="GO:0005524">
    <property type="term" value="F:ATP binding"/>
    <property type="evidence" value="ECO:0007669"/>
    <property type="project" value="UniProtKB-KW"/>
</dbReference>
<dbReference type="GO" id="GO:0050567">
    <property type="term" value="F:glutaminyl-tRNA synthase (glutamine-hydrolyzing) activity"/>
    <property type="evidence" value="ECO:0007669"/>
    <property type="project" value="UniProtKB-UniRule"/>
</dbReference>
<dbReference type="GO" id="GO:0070681">
    <property type="term" value="P:glutaminyl-tRNAGln biosynthesis via transamidation"/>
    <property type="evidence" value="ECO:0007669"/>
    <property type="project" value="TreeGrafter"/>
</dbReference>
<dbReference type="GO" id="GO:0006412">
    <property type="term" value="P:translation"/>
    <property type="evidence" value="ECO:0007669"/>
    <property type="project" value="UniProtKB-UniRule"/>
</dbReference>
<dbReference type="FunFam" id="1.10.10.410:FF:000001">
    <property type="entry name" value="Aspartyl/glutamyl-tRNA(Asn/Gln) amidotransferase subunit B"/>
    <property type="match status" value="1"/>
</dbReference>
<dbReference type="FunFam" id="1.10.150.380:FF:000001">
    <property type="entry name" value="Aspartyl/glutamyl-tRNA(Asn/Gln) amidotransferase subunit B"/>
    <property type="match status" value="1"/>
</dbReference>
<dbReference type="Gene3D" id="1.10.10.410">
    <property type="match status" value="1"/>
</dbReference>
<dbReference type="Gene3D" id="1.10.150.380">
    <property type="entry name" value="GatB domain, N-terminal subdomain"/>
    <property type="match status" value="1"/>
</dbReference>
<dbReference type="HAMAP" id="MF_00121">
    <property type="entry name" value="GatB"/>
    <property type="match status" value="1"/>
</dbReference>
<dbReference type="InterPro" id="IPR017959">
    <property type="entry name" value="Asn/Gln-tRNA_amidoTrfase_suB/E"/>
</dbReference>
<dbReference type="InterPro" id="IPR006075">
    <property type="entry name" value="Asn/Gln-tRNA_Trfase_suB/E_cat"/>
</dbReference>
<dbReference type="InterPro" id="IPR018027">
    <property type="entry name" value="Asn/Gln_amidotransferase"/>
</dbReference>
<dbReference type="InterPro" id="IPR003789">
    <property type="entry name" value="Asn/Gln_tRNA_amidoTrase-B-like"/>
</dbReference>
<dbReference type="InterPro" id="IPR004413">
    <property type="entry name" value="GatB"/>
</dbReference>
<dbReference type="InterPro" id="IPR042114">
    <property type="entry name" value="GatB_C_1"/>
</dbReference>
<dbReference type="InterPro" id="IPR023168">
    <property type="entry name" value="GatB_Yqey_C_2"/>
</dbReference>
<dbReference type="InterPro" id="IPR017958">
    <property type="entry name" value="Gln-tRNA_amidoTrfase_suB_CS"/>
</dbReference>
<dbReference type="InterPro" id="IPR014746">
    <property type="entry name" value="Gln_synth/guanido_kin_cat_dom"/>
</dbReference>
<dbReference type="NCBIfam" id="TIGR00133">
    <property type="entry name" value="gatB"/>
    <property type="match status" value="1"/>
</dbReference>
<dbReference type="NCBIfam" id="NF004011">
    <property type="entry name" value="PRK05477.1-1"/>
    <property type="match status" value="1"/>
</dbReference>
<dbReference type="NCBIfam" id="NF004012">
    <property type="entry name" value="PRK05477.1-2"/>
    <property type="match status" value="1"/>
</dbReference>
<dbReference type="NCBIfam" id="NF004014">
    <property type="entry name" value="PRK05477.1-4"/>
    <property type="match status" value="1"/>
</dbReference>
<dbReference type="PANTHER" id="PTHR11659">
    <property type="entry name" value="GLUTAMYL-TRNA GLN AMIDOTRANSFERASE SUBUNIT B MITOCHONDRIAL AND PROKARYOTIC PET112-RELATED"/>
    <property type="match status" value="1"/>
</dbReference>
<dbReference type="PANTHER" id="PTHR11659:SF0">
    <property type="entry name" value="GLUTAMYL-TRNA(GLN) AMIDOTRANSFERASE SUBUNIT B, MITOCHONDRIAL"/>
    <property type="match status" value="1"/>
</dbReference>
<dbReference type="Pfam" id="PF02934">
    <property type="entry name" value="GatB_N"/>
    <property type="match status" value="1"/>
</dbReference>
<dbReference type="Pfam" id="PF02637">
    <property type="entry name" value="GatB_Yqey"/>
    <property type="match status" value="1"/>
</dbReference>
<dbReference type="SMART" id="SM00845">
    <property type="entry name" value="GatB_Yqey"/>
    <property type="match status" value="1"/>
</dbReference>
<dbReference type="SUPFAM" id="SSF89095">
    <property type="entry name" value="GatB/YqeY motif"/>
    <property type="match status" value="1"/>
</dbReference>
<dbReference type="SUPFAM" id="SSF55931">
    <property type="entry name" value="Glutamine synthetase/guanido kinase"/>
    <property type="match status" value="1"/>
</dbReference>
<dbReference type="PROSITE" id="PS01234">
    <property type="entry name" value="GATB"/>
    <property type="match status" value="1"/>
</dbReference>
<organism>
    <name type="scientific">Limosilactobacillus reuteri subsp. reuteri (strain JCM 1112)</name>
    <name type="common">Lactobacillus reuteri</name>
    <dbReference type="NCBI Taxonomy" id="557433"/>
    <lineage>
        <taxon>Bacteria</taxon>
        <taxon>Bacillati</taxon>
        <taxon>Bacillota</taxon>
        <taxon>Bacilli</taxon>
        <taxon>Lactobacillales</taxon>
        <taxon>Lactobacillaceae</taxon>
        <taxon>Limosilactobacillus</taxon>
    </lineage>
</organism>
<reference key="1">
    <citation type="journal article" date="2008" name="DNA Res.">
        <title>Comparative genome analysis of Lactobacillus reuteri and Lactobacillus fermentum reveal a genomic island for reuterin and cobalamin production.</title>
        <authorList>
            <person name="Morita H."/>
            <person name="Toh H."/>
            <person name="Fukuda S."/>
            <person name="Horikawa H."/>
            <person name="Oshima K."/>
            <person name="Suzuki T."/>
            <person name="Murakami M."/>
            <person name="Hisamatsu S."/>
            <person name="Kato Y."/>
            <person name="Takizawa T."/>
            <person name="Fukuoka H."/>
            <person name="Yoshimura T."/>
            <person name="Itoh K."/>
            <person name="O'Sullivan D.J."/>
            <person name="McKay L.L."/>
            <person name="Ohno H."/>
            <person name="Kikuchi J."/>
            <person name="Masaoka T."/>
            <person name="Hattori M."/>
        </authorList>
    </citation>
    <scope>NUCLEOTIDE SEQUENCE [LARGE SCALE GENOMIC DNA]</scope>
    <source>
        <strain>JCM 1112</strain>
    </source>
</reference>
<comment type="function">
    <text evidence="1">Allows the formation of correctly charged Asn-tRNA(Asn) or Gln-tRNA(Gln) through the transamidation of misacylated Asp-tRNA(Asn) or Glu-tRNA(Gln) in organisms which lack either or both of asparaginyl-tRNA or glutaminyl-tRNA synthetases. The reaction takes place in the presence of glutamine and ATP through an activated phospho-Asp-tRNA(Asn) or phospho-Glu-tRNA(Gln).</text>
</comment>
<comment type="catalytic activity">
    <reaction evidence="1">
        <text>L-glutamyl-tRNA(Gln) + L-glutamine + ATP + H2O = L-glutaminyl-tRNA(Gln) + L-glutamate + ADP + phosphate + H(+)</text>
        <dbReference type="Rhea" id="RHEA:17521"/>
        <dbReference type="Rhea" id="RHEA-COMP:9681"/>
        <dbReference type="Rhea" id="RHEA-COMP:9684"/>
        <dbReference type="ChEBI" id="CHEBI:15377"/>
        <dbReference type="ChEBI" id="CHEBI:15378"/>
        <dbReference type="ChEBI" id="CHEBI:29985"/>
        <dbReference type="ChEBI" id="CHEBI:30616"/>
        <dbReference type="ChEBI" id="CHEBI:43474"/>
        <dbReference type="ChEBI" id="CHEBI:58359"/>
        <dbReference type="ChEBI" id="CHEBI:78520"/>
        <dbReference type="ChEBI" id="CHEBI:78521"/>
        <dbReference type="ChEBI" id="CHEBI:456216"/>
    </reaction>
</comment>
<comment type="catalytic activity">
    <reaction evidence="1">
        <text>L-aspartyl-tRNA(Asn) + L-glutamine + ATP + H2O = L-asparaginyl-tRNA(Asn) + L-glutamate + ADP + phosphate + 2 H(+)</text>
        <dbReference type="Rhea" id="RHEA:14513"/>
        <dbReference type="Rhea" id="RHEA-COMP:9674"/>
        <dbReference type="Rhea" id="RHEA-COMP:9677"/>
        <dbReference type="ChEBI" id="CHEBI:15377"/>
        <dbReference type="ChEBI" id="CHEBI:15378"/>
        <dbReference type="ChEBI" id="CHEBI:29985"/>
        <dbReference type="ChEBI" id="CHEBI:30616"/>
        <dbReference type="ChEBI" id="CHEBI:43474"/>
        <dbReference type="ChEBI" id="CHEBI:58359"/>
        <dbReference type="ChEBI" id="CHEBI:78515"/>
        <dbReference type="ChEBI" id="CHEBI:78516"/>
        <dbReference type="ChEBI" id="CHEBI:456216"/>
    </reaction>
</comment>
<comment type="subunit">
    <text evidence="1">Heterotrimer of A, B and C subunits.</text>
</comment>
<comment type="similarity">
    <text evidence="1">Belongs to the GatB/GatE family. GatB subfamily.</text>
</comment>
<proteinExistence type="inferred from homology"/>
<accession>B2G8T5</accession>
<feature type="chain" id="PRO_1000095218" description="Aspartyl/glutamyl-tRNA(Asn/Gln) amidotransferase subunit B">
    <location>
        <begin position="1"/>
        <end position="474"/>
    </location>
</feature>
<name>GATB_LIMRJ</name>
<keyword id="KW-0067">ATP-binding</keyword>
<keyword id="KW-0436">Ligase</keyword>
<keyword id="KW-0547">Nucleotide-binding</keyword>
<keyword id="KW-0648">Protein biosynthesis</keyword>
<gene>
    <name evidence="1" type="primary">gatB</name>
    <name type="ordered locus">LAR_1351</name>
</gene>